<feature type="chain" id="PRO_0000213660" description="Putative sugar uptake protein lmo0424">
    <location>
        <begin position="1"/>
        <end position="285"/>
    </location>
</feature>
<feature type="transmembrane region" description="Helical" evidence="1">
    <location>
        <begin position="2"/>
        <end position="21"/>
    </location>
</feature>
<feature type="transmembrane region" description="Helical" evidence="1">
    <location>
        <begin position="31"/>
        <end position="50"/>
    </location>
</feature>
<feature type="transmembrane region" description="Helical" evidence="1">
    <location>
        <begin position="55"/>
        <end position="77"/>
    </location>
</feature>
<feature type="transmembrane region" description="Helical" evidence="1">
    <location>
        <begin position="111"/>
        <end position="133"/>
    </location>
</feature>
<feature type="transmembrane region" description="Helical" evidence="1">
    <location>
        <begin position="146"/>
        <end position="168"/>
    </location>
</feature>
<feature type="transmembrane region" description="Helical" evidence="1">
    <location>
        <begin position="172"/>
        <end position="194"/>
    </location>
</feature>
<feature type="transmembrane region" description="Helical" evidence="1">
    <location>
        <begin position="207"/>
        <end position="229"/>
    </location>
</feature>
<feature type="transmembrane region" description="Helical" evidence="1">
    <location>
        <begin position="233"/>
        <end position="255"/>
    </location>
</feature>
<feature type="transmembrane region" description="Helical" evidence="1">
    <location>
        <begin position="262"/>
        <end position="284"/>
    </location>
</feature>
<accession>Q8Y9U6</accession>
<protein>
    <recommendedName>
        <fullName>Putative sugar uptake protein lmo0424</fullName>
    </recommendedName>
</protein>
<keyword id="KW-1003">Cell membrane</keyword>
<keyword id="KW-0472">Membrane</keyword>
<keyword id="KW-1185">Reference proteome</keyword>
<keyword id="KW-0762">Sugar transport</keyword>
<keyword id="KW-0812">Transmembrane</keyword>
<keyword id="KW-1133">Transmembrane helix</keyword>
<keyword id="KW-0813">Transport</keyword>
<comment type="subcellular location">
    <subcellularLocation>
        <location evidence="2">Cell membrane</location>
        <topology evidence="2">Multi-pass membrane protein</topology>
    </subcellularLocation>
</comment>
<comment type="similarity">
    <text evidence="2">Belongs to the GRP transporter (TC 2.A.7.5) family.</text>
</comment>
<dbReference type="EMBL" id="AL591975">
    <property type="protein sequence ID" value="CAC98503.1"/>
    <property type="molecule type" value="Genomic_DNA"/>
</dbReference>
<dbReference type="PIR" id="AI1127">
    <property type="entry name" value="AI1127"/>
</dbReference>
<dbReference type="RefSeq" id="NP_463953.1">
    <property type="nucleotide sequence ID" value="NC_003210.1"/>
</dbReference>
<dbReference type="RefSeq" id="WP_009912760.1">
    <property type="nucleotide sequence ID" value="NZ_CP149495.1"/>
</dbReference>
<dbReference type="SMR" id="Q8Y9U6"/>
<dbReference type="STRING" id="169963.gene:17593075"/>
<dbReference type="PaxDb" id="169963-lmo0424"/>
<dbReference type="EnsemblBacteria" id="CAC98503">
    <property type="protein sequence ID" value="CAC98503"/>
    <property type="gene ID" value="CAC98503"/>
</dbReference>
<dbReference type="GeneID" id="987866"/>
<dbReference type="KEGG" id="lmo:lmo0424"/>
<dbReference type="PATRIC" id="fig|169963.11.peg.437"/>
<dbReference type="eggNOG" id="COG4975">
    <property type="taxonomic scope" value="Bacteria"/>
</dbReference>
<dbReference type="HOGENOM" id="CLU_076024_0_0_9"/>
<dbReference type="OrthoDB" id="1452595at2"/>
<dbReference type="PhylomeDB" id="Q8Y9U6"/>
<dbReference type="BioCyc" id="LMON169963:LMO0424-MONOMER"/>
<dbReference type="Proteomes" id="UP000000817">
    <property type="component" value="Chromosome"/>
</dbReference>
<dbReference type="GO" id="GO:0005886">
    <property type="term" value="C:plasma membrane"/>
    <property type="evidence" value="ECO:0007669"/>
    <property type="project" value="UniProtKB-SubCell"/>
</dbReference>
<dbReference type="GO" id="GO:0015144">
    <property type="term" value="F:carbohydrate transmembrane transporter activity"/>
    <property type="evidence" value="ECO:0007669"/>
    <property type="project" value="InterPro"/>
</dbReference>
<dbReference type="CDD" id="cd23110">
    <property type="entry name" value="GRP"/>
    <property type="match status" value="1"/>
</dbReference>
<dbReference type="InterPro" id="IPR010651">
    <property type="entry name" value="Sugar_transport"/>
</dbReference>
<dbReference type="PANTHER" id="PTHR16119">
    <property type="entry name" value="TRANSMEMBRANE PROTEIN 144"/>
    <property type="match status" value="1"/>
</dbReference>
<dbReference type="PANTHER" id="PTHR16119:SF17">
    <property type="entry name" value="TRANSMEMBRANE PROTEIN 144"/>
    <property type="match status" value="1"/>
</dbReference>
<dbReference type="Pfam" id="PF06800">
    <property type="entry name" value="Sugar_transport"/>
    <property type="match status" value="1"/>
</dbReference>
<dbReference type="SUPFAM" id="SSF103481">
    <property type="entry name" value="Multidrug resistance efflux transporter EmrE"/>
    <property type="match status" value="2"/>
</dbReference>
<sequence length="285" mass="30729">MSIYLIALLPVLGWGFMPIIANLRKSTPEEQLLGTSISALLFALILFWILSPEITVLSFIVSFISGIFWSFGQLLQFKGIAASSVAKAMPISNGTQLVGATLFAVLVFREWQTVTAVIIGVVAVILILIGVVMTGFQKRGNHITESVSFHVYGIVILSSFFLTLYVVTNQLFDVTGFSIILPQAIGMLTCAIGINLAKKTAISRKNVTFNLMTGLSWSIANLGMFLATAVLGVATSFSISQACVIVATIGGILIFKQKKSPLEWTFILSGILLIMVGVVFLSLLK</sequence>
<reference key="1">
    <citation type="journal article" date="2001" name="Science">
        <title>Comparative genomics of Listeria species.</title>
        <authorList>
            <person name="Glaser P."/>
            <person name="Frangeul L."/>
            <person name="Buchrieser C."/>
            <person name="Rusniok C."/>
            <person name="Amend A."/>
            <person name="Baquero F."/>
            <person name="Berche P."/>
            <person name="Bloecker H."/>
            <person name="Brandt P."/>
            <person name="Chakraborty T."/>
            <person name="Charbit A."/>
            <person name="Chetouani F."/>
            <person name="Couve E."/>
            <person name="de Daruvar A."/>
            <person name="Dehoux P."/>
            <person name="Domann E."/>
            <person name="Dominguez-Bernal G."/>
            <person name="Duchaud E."/>
            <person name="Durant L."/>
            <person name="Dussurget O."/>
            <person name="Entian K.-D."/>
            <person name="Fsihi H."/>
            <person name="Garcia-del Portillo F."/>
            <person name="Garrido P."/>
            <person name="Gautier L."/>
            <person name="Goebel W."/>
            <person name="Gomez-Lopez N."/>
            <person name="Hain T."/>
            <person name="Hauf J."/>
            <person name="Jackson D."/>
            <person name="Jones L.-M."/>
            <person name="Kaerst U."/>
            <person name="Kreft J."/>
            <person name="Kuhn M."/>
            <person name="Kunst F."/>
            <person name="Kurapkat G."/>
            <person name="Madueno E."/>
            <person name="Maitournam A."/>
            <person name="Mata Vicente J."/>
            <person name="Ng E."/>
            <person name="Nedjari H."/>
            <person name="Nordsiek G."/>
            <person name="Novella S."/>
            <person name="de Pablos B."/>
            <person name="Perez-Diaz J.-C."/>
            <person name="Purcell R."/>
            <person name="Remmel B."/>
            <person name="Rose M."/>
            <person name="Schlueter T."/>
            <person name="Simoes N."/>
            <person name="Tierrez A."/>
            <person name="Vazquez-Boland J.-A."/>
            <person name="Voss H."/>
            <person name="Wehland J."/>
            <person name="Cossart P."/>
        </authorList>
    </citation>
    <scope>NUCLEOTIDE SEQUENCE [LARGE SCALE GENOMIC DNA]</scope>
    <source>
        <strain>ATCC BAA-679 / EGD-e</strain>
    </source>
</reference>
<proteinExistence type="inferred from homology"/>
<name>Y424_LISMO</name>
<organism>
    <name type="scientific">Listeria monocytogenes serovar 1/2a (strain ATCC BAA-679 / EGD-e)</name>
    <dbReference type="NCBI Taxonomy" id="169963"/>
    <lineage>
        <taxon>Bacteria</taxon>
        <taxon>Bacillati</taxon>
        <taxon>Bacillota</taxon>
        <taxon>Bacilli</taxon>
        <taxon>Bacillales</taxon>
        <taxon>Listeriaceae</taxon>
        <taxon>Listeria</taxon>
    </lineage>
</organism>
<evidence type="ECO:0000255" key="1"/>
<evidence type="ECO:0000305" key="2"/>
<gene>
    <name type="ordered locus">lmo0424</name>
</gene>